<sequence length="220" mass="22942">MKLNKYIDHTILKPETTQEQVEKILAEAKEYDFASVCVNPTWVALAAESLKDSDVKVCTVIGFPLGANTPAVKAFETKDAISNGADEIDVVINIGALKTGNYDLVLEDIKAVVAASGDKLVKVIIEACLLTDDEKVKACQLSQEAGADYVKTSTGFSTGGATVADVALMRKTVGPDMGVKASGGARSYEDAIAFIEAGASRIGASSGVAIMNGAQADGDY</sequence>
<evidence type="ECO:0000255" key="1">
    <source>
        <dbReference type="HAMAP-Rule" id="MF_00114"/>
    </source>
</evidence>
<proteinExistence type="inferred from homology"/>
<organism>
    <name type="scientific">Streptococcus suis (strain 98HAH33)</name>
    <dbReference type="NCBI Taxonomy" id="391296"/>
    <lineage>
        <taxon>Bacteria</taxon>
        <taxon>Bacillati</taxon>
        <taxon>Bacillota</taxon>
        <taxon>Bacilli</taxon>
        <taxon>Lactobacillales</taxon>
        <taxon>Streptococcaceae</taxon>
        <taxon>Streptococcus</taxon>
    </lineage>
</organism>
<accession>A4W1L5</accession>
<keyword id="KW-0963">Cytoplasm</keyword>
<keyword id="KW-0456">Lyase</keyword>
<keyword id="KW-0704">Schiff base</keyword>
<feature type="chain" id="PRO_1000015336" description="Deoxyribose-phosphate aldolase">
    <location>
        <begin position="1"/>
        <end position="220"/>
    </location>
</feature>
<feature type="active site" description="Proton donor/acceptor" evidence="1">
    <location>
        <position position="89"/>
    </location>
</feature>
<feature type="active site" description="Schiff-base intermediate with acetaldehyde" evidence="1">
    <location>
        <position position="151"/>
    </location>
</feature>
<feature type="active site" description="Proton donor/acceptor" evidence="1">
    <location>
        <position position="180"/>
    </location>
</feature>
<dbReference type="EC" id="4.1.2.4" evidence="1"/>
<dbReference type="EMBL" id="CP000408">
    <property type="protein sequence ID" value="ABP92254.1"/>
    <property type="molecule type" value="Genomic_DNA"/>
</dbReference>
<dbReference type="SMR" id="A4W1L5"/>
<dbReference type="KEGG" id="ssv:SSU98_1096"/>
<dbReference type="HOGENOM" id="CLU_053595_0_1_9"/>
<dbReference type="UniPathway" id="UPA00002">
    <property type="reaction ID" value="UER00468"/>
</dbReference>
<dbReference type="GO" id="GO:0005737">
    <property type="term" value="C:cytoplasm"/>
    <property type="evidence" value="ECO:0007669"/>
    <property type="project" value="UniProtKB-SubCell"/>
</dbReference>
<dbReference type="GO" id="GO:0004139">
    <property type="term" value="F:deoxyribose-phosphate aldolase activity"/>
    <property type="evidence" value="ECO:0007669"/>
    <property type="project" value="UniProtKB-UniRule"/>
</dbReference>
<dbReference type="GO" id="GO:0006018">
    <property type="term" value="P:2-deoxyribose 1-phosphate catabolic process"/>
    <property type="evidence" value="ECO:0007669"/>
    <property type="project" value="UniProtKB-UniRule"/>
</dbReference>
<dbReference type="GO" id="GO:0016052">
    <property type="term" value="P:carbohydrate catabolic process"/>
    <property type="evidence" value="ECO:0007669"/>
    <property type="project" value="TreeGrafter"/>
</dbReference>
<dbReference type="GO" id="GO:0009264">
    <property type="term" value="P:deoxyribonucleotide catabolic process"/>
    <property type="evidence" value="ECO:0007669"/>
    <property type="project" value="InterPro"/>
</dbReference>
<dbReference type="CDD" id="cd00959">
    <property type="entry name" value="DeoC"/>
    <property type="match status" value="1"/>
</dbReference>
<dbReference type="FunFam" id="3.20.20.70:FF:000044">
    <property type="entry name" value="Deoxyribose-phosphate aldolase"/>
    <property type="match status" value="1"/>
</dbReference>
<dbReference type="Gene3D" id="3.20.20.70">
    <property type="entry name" value="Aldolase class I"/>
    <property type="match status" value="1"/>
</dbReference>
<dbReference type="HAMAP" id="MF_00114">
    <property type="entry name" value="DeoC_type1"/>
    <property type="match status" value="1"/>
</dbReference>
<dbReference type="InterPro" id="IPR013785">
    <property type="entry name" value="Aldolase_TIM"/>
</dbReference>
<dbReference type="InterPro" id="IPR011343">
    <property type="entry name" value="DeoC"/>
</dbReference>
<dbReference type="InterPro" id="IPR002915">
    <property type="entry name" value="DeoC/FbaB/LacD_aldolase"/>
</dbReference>
<dbReference type="InterPro" id="IPR028581">
    <property type="entry name" value="DeoC_typeI"/>
</dbReference>
<dbReference type="NCBIfam" id="TIGR00126">
    <property type="entry name" value="deoC"/>
    <property type="match status" value="1"/>
</dbReference>
<dbReference type="PANTHER" id="PTHR10889">
    <property type="entry name" value="DEOXYRIBOSE-PHOSPHATE ALDOLASE"/>
    <property type="match status" value="1"/>
</dbReference>
<dbReference type="PANTHER" id="PTHR10889:SF1">
    <property type="entry name" value="DEOXYRIBOSE-PHOSPHATE ALDOLASE"/>
    <property type="match status" value="1"/>
</dbReference>
<dbReference type="Pfam" id="PF01791">
    <property type="entry name" value="DeoC"/>
    <property type="match status" value="1"/>
</dbReference>
<dbReference type="PIRSF" id="PIRSF001357">
    <property type="entry name" value="DeoC"/>
    <property type="match status" value="1"/>
</dbReference>
<dbReference type="SMART" id="SM01133">
    <property type="entry name" value="DeoC"/>
    <property type="match status" value="1"/>
</dbReference>
<dbReference type="SUPFAM" id="SSF51569">
    <property type="entry name" value="Aldolase"/>
    <property type="match status" value="1"/>
</dbReference>
<protein>
    <recommendedName>
        <fullName evidence="1">Deoxyribose-phosphate aldolase</fullName>
        <shortName evidence="1">DERA</shortName>
        <ecNumber evidence="1">4.1.2.4</ecNumber>
    </recommendedName>
    <alternativeName>
        <fullName evidence="1">2-deoxy-D-ribose 5-phosphate aldolase</fullName>
    </alternativeName>
    <alternativeName>
        <fullName evidence="1">Phosphodeoxyriboaldolase</fullName>
        <shortName evidence="1">Deoxyriboaldolase</shortName>
    </alternativeName>
</protein>
<name>DEOC_STRS2</name>
<reference key="1">
    <citation type="journal article" date="2007" name="PLoS ONE">
        <title>A glimpse of streptococcal toxic shock syndrome from comparative genomics of S. suis 2 Chinese isolates.</title>
        <authorList>
            <person name="Chen C."/>
            <person name="Tang J."/>
            <person name="Dong W."/>
            <person name="Wang C."/>
            <person name="Feng Y."/>
            <person name="Wang J."/>
            <person name="Zheng F."/>
            <person name="Pan X."/>
            <person name="Liu D."/>
            <person name="Li M."/>
            <person name="Song Y."/>
            <person name="Zhu X."/>
            <person name="Sun H."/>
            <person name="Feng T."/>
            <person name="Guo Z."/>
            <person name="Ju A."/>
            <person name="Ge J."/>
            <person name="Dong Y."/>
            <person name="Sun W."/>
            <person name="Jiang Y."/>
            <person name="Wang J."/>
            <person name="Yan J."/>
            <person name="Yang H."/>
            <person name="Wang X."/>
            <person name="Gao G.F."/>
            <person name="Yang R."/>
            <person name="Wang J."/>
            <person name="Yu J."/>
        </authorList>
    </citation>
    <scope>NUCLEOTIDE SEQUENCE [LARGE SCALE GENOMIC DNA]</scope>
    <source>
        <strain>98HAH33</strain>
    </source>
</reference>
<gene>
    <name evidence="1" type="primary">deoC</name>
    <name type="ordered locus">SSU98_1096</name>
</gene>
<comment type="function">
    <text evidence="1">Catalyzes a reversible aldol reaction between acetaldehyde and D-glyceraldehyde 3-phosphate to generate 2-deoxy-D-ribose 5-phosphate.</text>
</comment>
<comment type="catalytic activity">
    <reaction evidence="1">
        <text>2-deoxy-D-ribose 5-phosphate = D-glyceraldehyde 3-phosphate + acetaldehyde</text>
        <dbReference type="Rhea" id="RHEA:12821"/>
        <dbReference type="ChEBI" id="CHEBI:15343"/>
        <dbReference type="ChEBI" id="CHEBI:59776"/>
        <dbReference type="ChEBI" id="CHEBI:62877"/>
        <dbReference type="EC" id="4.1.2.4"/>
    </reaction>
</comment>
<comment type="pathway">
    <text evidence="1">Carbohydrate degradation; 2-deoxy-D-ribose 1-phosphate degradation; D-glyceraldehyde 3-phosphate and acetaldehyde from 2-deoxy-alpha-D-ribose 1-phosphate: step 2/2.</text>
</comment>
<comment type="subcellular location">
    <subcellularLocation>
        <location evidence="1">Cytoplasm</location>
    </subcellularLocation>
</comment>
<comment type="similarity">
    <text evidence="1">Belongs to the DeoC/FbaB aldolase family. DeoC type 1 subfamily.</text>
</comment>